<evidence type="ECO:0000255" key="1">
    <source>
        <dbReference type="HAMAP-Rule" id="MF_01261"/>
    </source>
</evidence>
<dbReference type="EC" id="2.7.7.72" evidence="1"/>
<dbReference type="EC" id="3.1.3.-" evidence="1"/>
<dbReference type="EC" id="3.1.4.-" evidence="1"/>
<dbReference type="EMBL" id="CP001025">
    <property type="protein sequence ID" value="ACB65418.1"/>
    <property type="molecule type" value="Genomic_DNA"/>
</dbReference>
<dbReference type="RefSeq" id="WP_012364912.1">
    <property type="nucleotide sequence ID" value="NC_010551.1"/>
</dbReference>
<dbReference type="SMR" id="B1YPB3"/>
<dbReference type="KEGG" id="bac:BamMC406_2942"/>
<dbReference type="HOGENOM" id="CLU_015961_1_1_4"/>
<dbReference type="OrthoDB" id="9805698at2"/>
<dbReference type="Proteomes" id="UP000001680">
    <property type="component" value="Chromosome 1"/>
</dbReference>
<dbReference type="GO" id="GO:0005524">
    <property type="term" value="F:ATP binding"/>
    <property type="evidence" value="ECO:0007669"/>
    <property type="project" value="UniProtKB-UniRule"/>
</dbReference>
<dbReference type="GO" id="GO:0004810">
    <property type="term" value="F:CCA tRNA nucleotidyltransferase activity"/>
    <property type="evidence" value="ECO:0007669"/>
    <property type="project" value="UniProtKB-UniRule"/>
</dbReference>
<dbReference type="GO" id="GO:0004112">
    <property type="term" value="F:cyclic-nucleotide phosphodiesterase activity"/>
    <property type="evidence" value="ECO:0007669"/>
    <property type="project" value="UniProtKB-UniRule"/>
</dbReference>
<dbReference type="GO" id="GO:0000287">
    <property type="term" value="F:magnesium ion binding"/>
    <property type="evidence" value="ECO:0007669"/>
    <property type="project" value="UniProtKB-UniRule"/>
</dbReference>
<dbReference type="GO" id="GO:0016791">
    <property type="term" value="F:phosphatase activity"/>
    <property type="evidence" value="ECO:0007669"/>
    <property type="project" value="UniProtKB-UniRule"/>
</dbReference>
<dbReference type="GO" id="GO:0000049">
    <property type="term" value="F:tRNA binding"/>
    <property type="evidence" value="ECO:0007669"/>
    <property type="project" value="UniProtKB-UniRule"/>
</dbReference>
<dbReference type="GO" id="GO:0042245">
    <property type="term" value="P:RNA repair"/>
    <property type="evidence" value="ECO:0007669"/>
    <property type="project" value="UniProtKB-KW"/>
</dbReference>
<dbReference type="GO" id="GO:0001680">
    <property type="term" value="P:tRNA 3'-terminal CCA addition"/>
    <property type="evidence" value="ECO:0007669"/>
    <property type="project" value="UniProtKB-UniRule"/>
</dbReference>
<dbReference type="CDD" id="cd05398">
    <property type="entry name" value="NT_ClassII-CCAase"/>
    <property type="match status" value="1"/>
</dbReference>
<dbReference type="Gene3D" id="3.30.460.10">
    <property type="entry name" value="Beta Polymerase, domain 2"/>
    <property type="match status" value="1"/>
</dbReference>
<dbReference type="Gene3D" id="1.10.3090.10">
    <property type="entry name" value="cca-adding enzyme, domain 2"/>
    <property type="match status" value="1"/>
</dbReference>
<dbReference type="HAMAP" id="MF_01261">
    <property type="entry name" value="CCA_bact_type1"/>
    <property type="match status" value="1"/>
</dbReference>
<dbReference type="InterPro" id="IPR012006">
    <property type="entry name" value="CCA_bact"/>
</dbReference>
<dbReference type="InterPro" id="IPR006674">
    <property type="entry name" value="HD_domain"/>
</dbReference>
<dbReference type="InterPro" id="IPR043519">
    <property type="entry name" value="NT_sf"/>
</dbReference>
<dbReference type="InterPro" id="IPR002646">
    <property type="entry name" value="PolA_pol_head_dom"/>
</dbReference>
<dbReference type="InterPro" id="IPR032828">
    <property type="entry name" value="PolyA_RNA-bd"/>
</dbReference>
<dbReference type="InterPro" id="IPR050124">
    <property type="entry name" value="tRNA_CCA-adding_enzyme"/>
</dbReference>
<dbReference type="NCBIfam" id="NF008137">
    <property type="entry name" value="PRK10885.1"/>
    <property type="match status" value="1"/>
</dbReference>
<dbReference type="PANTHER" id="PTHR47545">
    <property type="entry name" value="MULTIFUNCTIONAL CCA PROTEIN"/>
    <property type="match status" value="1"/>
</dbReference>
<dbReference type="PANTHER" id="PTHR47545:SF1">
    <property type="entry name" value="MULTIFUNCTIONAL CCA PROTEIN"/>
    <property type="match status" value="1"/>
</dbReference>
<dbReference type="Pfam" id="PF01966">
    <property type="entry name" value="HD"/>
    <property type="match status" value="1"/>
</dbReference>
<dbReference type="Pfam" id="PF01743">
    <property type="entry name" value="PolyA_pol"/>
    <property type="match status" value="1"/>
</dbReference>
<dbReference type="Pfam" id="PF12627">
    <property type="entry name" value="PolyA_pol_RNAbd"/>
    <property type="match status" value="1"/>
</dbReference>
<dbReference type="PIRSF" id="PIRSF000813">
    <property type="entry name" value="CCA_bact"/>
    <property type="match status" value="1"/>
</dbReference>
<dbReference type="SUPFAM" id="SSF81301">
    <property type="entry name" value="Nucleotidyltransferase"/>
    <property type="match status" value="1"/>
</dbReference>
<dbReference type="SUPFAM" id="SSF81891">
    <property type="entry name" value="Poly A polymerase C-terminal region-like"/>
    <property type="match status" value="1"/>
</dbReference>
<dbReference type="PROSITE" id="PS51831">
    <property type="entry name" value="HD"/>
    <property type="match status" value="1"/>
</dbReference>
<sequence length="413" mass="45535">MNIYAVGGAIRDELLGVPVQDRDYVVVGATPEQMVAQGFRPVGKDFPVFLHPDTQEEYALARTERKTAAGYHGFQFYFAPDVTLDEDLARRDLTINAMAREVSPEGALVGPVIDPFDGQADLRARVFRHVGDAFVEDPVRILRIARFAARFADFTVADDTLALMRRMVDAGEADALVAERVWQEIARGLMEAKPSRMFAVLRECGALARVLPEVDALWGVPQRADYHPEVDTGVHVMMVVDYAAKQGYSLPVRFAALTHDLGKATTPADVLPRHVGHEGRSVELIKPLCERLRVPNDCRDLALVVAREHGNLHRVMEMGAAALVRFFERSDALRKPARFAEMLQACESDARGRLGLDTQPYPQAERLRVALVAARSVDAGAIARGVGDDVMQIKDAVHRARVEAVKQALAIGE</sequence>
<accession>B1YPB3</accession>
<proteinExistence type="inferred from homology"/>
<feature type="chain" id="PRO_1000140023" description="Multifunctional CCA protein">
    <location>
        <begin position="1"/>
        <end position="413"/>
    </location>
</feature>
<feature type="domain" description="HD" evidence="1">
    <location>
        <begin position="232"/>
        <end position="333"/>
    </location>
</feature>
<feature type="binding site" evidence="1">
    <location>
        <position position="8"/>
    </location>
    <ligand>
        <name>ATP</name>
        <dbReference type="ChEBI" id="CHEBI:30616"/>
    </ligand>
</feature>
<feature type="binding site" evidence="1">
    <location>
        <position position="8"/>
    </location>
    <ligand>
        <name>CTP</name>
        <dbReference type="ChEBI" id="CHEBI:37563"/>
    </ligand>
</feature>
<feature type="binding site" evidence="1">
    <location>
        <position position="11"/>
    </location>
    <ligand>
        <name>ATP</name>
        <dbReference type="ChEBI" id="CHEBI:30616"/>
    </ligand>
</feature>
<feature type="binding site" evidence="1">
    <location>
        <position position="11"/>
    </location>
    <ligand>
        <name>CTP</name>
        <dbReference type="ChEBI" id="CHEBI:37563"/>
    </ligand>
</feature>
<feature type="binding site" evidence="1">
    <location>
        <position position="21"/>
    </location>
    <ligand>
        <name>Mg(2+)</name>
        <dbReference type="ChEBI" id="CHEBI:18420"/>
    </ligand>
</feature>
<feature type="binding site" evidence="1">
    <location>
        <position position="23"/>
    </location>
    <ligand>
        <name>Mg(2+)</name>
        <dbReference type="ChEBI" id="CHEBI:18420"/>
    </ligand>
</feature>
<feature type="binding site" evidence="1">
    <location>
        <position position="91"/>
    </location>
    <ligand>
        <name>ATP</name>
        <dbReference type="ChEBI" id="CHEBI:30616"/>
    </ligand>
</feature>
<feature type="binding site" evidence="1">
    <location>
        <position position="91"/>
    </location>
    <ligand>
        <name>CTP</name>
        <dbReference type="ChEBI" id="CHEBI:37563"/>
    </ligand>
</feature>
<feature type="binding site" evidence="1">
    <location>
        <position position="143"/>
    </location>
    <ligand>
        <name>ATP</name>
        <dbReference type="ChEBI" id="CHEBI:30616"/>
    </ligand>
</feature>
<feature type="binding site" evidence="1">
    <location>
        <position position="143"/>
    </location>
    <ligand>
        <name>CTP</name>
        <dbReference type="ChEBI" id="CHEBI:37563"/>
    </ligand>
</feature>
<feature type="binding site" evidence="1">
    <location>
        <position position="146"/>
    </location>
    <ligand>
        <name>ATP</name>
        <dbReference type="ChEBI" id="CHEBI:30616"/>
    </ligand>
</feature>
<feature type="binding site" evidence="1">
    <location>
        <position position="146"/>
    </location>
    <ligand>
        <name>CTP</name>
        <dbReference type="ChEBI" id="CHEBI:37563"/>
    </ligand>
</feature>
<organism>
    <name type="scientific">Burkholderia ambifaria (strain MC40-6)</name>
    <dbReference type="NCBI Taxonomy" id="398577"/>
    <lineage>
        <taxon>Bacteria</taxon>
        <taxon>Pseudomonadati</taxon>
        <taxon>Pseudomonadota</taxon>
        <taxon>Betaproteobacteria</taxon>
        <taxon>Burkholderiales</taxon>
        <taxon>Burkholderiaceae</taxon>
        <taxon>Burkholderia</taxon>
        <taxon>Burkholderia cepacia complex</taxon>
    </lineage>
</organism>
<name>CCA_BURA4</name>
<gene>
    <name evidence="1" type="primary">cca</name>
    <name type="ordered locus">BamMC406_2942</name>
</gene>
<comment type="function">
    <text evidence="1">Catalyzes the addition and repair of the essential 3'-terminal CCA sequence in tRNAs without using a nucleic acid template. Adds these three nucleotides in the order of C, C, and A to the tRNA nucleotide-73, using CTP and ATP as substrates and producing inorganic pyrophosphate. tRNA 3'-terminal CCA addition is required both for tRNA processing and repair. Also involved in tRNA surveillance by mediating tandem CCA addition to generate a CCACCA at the 3' terminus of unstable tRNAs. While stable tRNAs receive only 3'-terminal CCA, unstable tRNAs are marked with CCACCA and rapidly degraded.</text>
</comment>
<comment type="catalytic activity">
    <reaction evidence="1">
        <text>a tRNA precursor + 2 CTP + ATP = a tRNA with a 3' CCA end + 3 diphosphate</text>
        <dbReference type="Rhea" id="RHEA:14433"/>
        <dbReference type="Rhea" id="RHEA-COMP:10465"/>
        <dbReference type="Rhea" id="RHEA-COMP:10468"/>
        <dbReference type="ChEBI" id="CHEBI:30616"/>
        <dbReference type="ChEBI" id="CHEBI:33019"/>
        <dbReference type="ChEBI" id="CHEBI:37563"/>
        <dbReference type="ChEBI" id="CHEBI:74896"/>
        <dbReference type="ChEBI" id="CHEBI:83071"/>
        <dbReference type="EC" id="2.7.7.72"/>
    </reaction>
</comment>
<comment type="catalytic activity">
    <reaction evidence="1">
        <text>a tRNA with a 3' CCA end + 2 CTP + ATP = a tRNA with a 3' CCACCA end + 3 diphosphate</text>
        <dbReference type="Rhea" id="RHEA:76235"/>
        <dbReference type="Rhea" id="RHEA-COMP:10468"/>
        <dbReference type="Rhea" id="RHEA-COMP:18655"/>
        <dbReference type="ChEBI" id="CHEBI:30616"/>
        <dbReference type="ChEBI" id="CHEBI:33019"/>
        <dbReference type="ChEBI" id="CHEBI:37563"/>
        <dbReference type="ChEBI" id="CHEBI:83071"/>
        <dbReference type="ChEBI" id="CHEBI:195187"/>
    </reaction>
    <physiologicalReaction direction="left-to-right" evidence="1">
        <dbReference type="Rhea" id="RHEA:76236"/>
    </physiologicalReaction>
</comment>
<comment type="cofactor">
    <cofactor evidence="1">
        <name>Mg(2+)</name>
        <dbReference type="ChEBI" id="CHEBI:18420"/>
    </cofactor>
    <text evidence="1">Magnesium is required for nucleotidyltransferase activity.</text>
</comment>
<comment type="cofactor">
    <cofactor evidence="1">
        <name>Ni(2+)</name>
        <dbReference type="ChEBI" id="CHEBI:49786"/>
    </cofactor>
    <text evidence="1">Nickel for phosphatase activity.</text>
</comment>
<comment type="subunit">
    <text evidence="1">Monomer. Can also form homodimers and oligomers.</text>
</comment>
<comment type="domain">
    <text evidence="1">Comprises two domains: an N-terminal domain containing the nucleotidyltransferase activity and a C-terminal HD domain associated with both phosphodiesterase and phosphatase activities.</text>
</comment>
<comment type="miscellaneous">
    <text evidence="1">A single active site specifically recognizes both ATP and CTP and is responsible for their addition.</text>
</comment>
<comment type="similarity">
    <text evidence="1">Belongs to the tRNA nucleotidyltransferase/poly(A) polymerase family. Bacterial CCA-adding enzyme type 1 subfamily.</text>
</comment>
<protein>
    <recommendedName>
        <fullName evidence="1">Multifunctional CCA protein</fullName>
    </recommendedName>
    <domain>
        <recommendedName>
            <fullName evidence="1">CCA-adding enzyme</fullName>
            <ecNumber evidence="1">2.7.7.72</ecNumber>
        </recommendedName>
        <alternativeName>
            <fullName evidence="1">CCA tRNA nucleotidyltransferase</fullName>
        </alternativeName>
        <alternativeName>
            <fullName evidence="1">tRNA CCA-pyrophosphorylase</fullName>
        </alternativeName>
        <alternativeName>
            <fullName evidence="1">tRNA adenylyl-/cytidylyl-transferase</fullName>
        </alternativeName>
        <alternativeName>
            <fullName evidence="1">tRNA nucleotidyltransferase</fullName>
        </alternativeName>
        <alternativeName>
            <fullName evidence="1">tRNA-NT</fullName>
        </alternativeName>
    </domain>
    <domain>
        <recommendedName>
            <fullName evidence="1">2'-nucleotidase</fullName>
            <ecNumber evidence="1">3.1.3.-</ecNumber>
        </recommendedName>
    </domain>
    <domain>
        <recommendedName>
            <fullName evidence="1">2',3'-cyclic phosphodiesterase</fullName>
            <ecNumber evidence="1">3.1.4.-</ecNumber>
        </recommendedName>
    </domain>
    <domain>
        <recommendedName>
            <fullName evidence="1">Phosphatase</fullName>
            <ecNumber evidence="1">3.1.3.-</ecNumber>
        </recommendedName>
    </domain>
</protein>
<keyword id="KW-0067">ATP-binding</keyword>
<keyword id="KW-0378">Hydrolase</keyword>
<keyword id="KW-0460">Magnesium</keyword>
<keyword id="KW-0479">Metal-binding</keyword>
<keyword id="KW-0511">Multifunctional enzyme</keyword>
<keyword id="KW-0533">Nickel</keyword>
<keyword id="KW-0547">Nucleotide-binding</keyword>
<keyword id="KW-0548">Nucleotidyltransferase</keyword>
<keyword id="KW-0692">RNA repair</keyword>
<keyword id="KW-0694">RNA-binding</keyword>
<keyword id="KW-0808">Transferase</keyword>
<keyword id="KW-0819">tRNA processing</keyword>
<reference key="1">
    <citation type="submission" date="2008-04" db="EMBL/GenBank/DDBJ databases">
        <title>Complete sequence of chromosome 1 of Burkholderia ambifaria MC40-6.</title>
        <authorList>
            <person name="Copeland A."/>
            <person name="Lucas S."/>
            <person name="Lapidus A."/>
            <person name="Glavina del Rio T."/>
            <person name="Dalin E."/>
            <person name="Tice H."/>
            <person name="Pitluck S."/>
            <person name="Chain P."/>
            <person name="Malfatti S."/>
            <person name="Shin M."/>
            <person name="Vergez L."/>
            <person name="Lang D."/>
            <person name="Schmutz J."/>
            <person name="Larimer F."/>
            <person name="Land M."/>
            <person name="Hauser L."/>
            <person name="Kyrpides N."/>
            <person name="Lykidis A."/>
            <person name="Ramette A."/>
            <person name="Konstantinidis K."/>
            <person name="Tiedje J."/>
            <person name="Richardson P."/>
        </authorList>
    </citation>
    <scope>NUCLEOTIDE SEQUENCE [LARGE SCALE GENOMIC DNA]</scope>
    <source>
        <strain>MC40-6</strain>
    </source>
</reference>